<proteinExistence type="inferred from homology"/>
<protein>
    <recommendedName>
        <fullName evidence="1">3-isopropylmalate dehydratase large subunit</fullName>
        <ecNumber evidence="1">4.2.1.33</ecNumber>
    </recommendedName>
    <alternativeName>
        <fullName evidence="1">Alpha-IPM isomerase</fullName>
        <shortName evidence="1">IPMI</shortName>
    </alternativeName>
    <alternativeName>
        <fullName evidence="1">Isopropylmalate isomerase</fullName>
    </alternativeName>
</protein>
<organism>
    <name type="scientific">Anoxybacillus flavithermus (strain DSM 21510 / WK1)</name>
    <dbReference type="NCBI Taxonomy" id="491915"/>
    <lineage>
        <taxon>Bacteria</taxon>
        <taxon>Bacillati</taxon>
        <taxon>Bacillota</taxon>
        <taxon>Bacilli</taxon>
        <taxon>Bacillales</taxon>
        <taxon>Anoxybacillaceae</taxon>
        <taxon>Anoxybacillus</taxon>
    </lineage>
</organism>
<sequence length="471" mass="51344">MVPKTIIEKIWDEHVVYREDGKPDLLYIDLHLVHEVTSPQAFEGLRQKGRKVRRPDLTFATMDHNVPTINRSVVEDEVAKNQMTALERNCREFGVPLADLNSPEQGIVHVIGPELGLTQPGKTIVCGDSHTSTHGAFGALAFGIGTSEVEHVLATQTLWQHRPKTMQVNVTGSLAPGVSAKDVILAIIGKFGVDFGTGYVLEFTGDVIRRMSMEERMTICNMSIEAGARAGLIAPDDVTFAYLKERKYAPKGEAFEQAVEKWKQLCTDEGAVYDRVVHIDGSEIAPTVTWGTTPAMSSPIDGTVPDPNEFATETERKAVQLALQYMGLKPGTKMTDIAVQHVFIGSCTNSRISDLREAAQIVKGKKVAPGVRALVVPGSQQVKKQAEEEGIAQTFIDAGFEWRDSGCSMCLGMNPDTVPAGEHCASTSNRNFEGRQGKGARTHLVSPAMAAAAAIYGHFVDVRTLYKEVVR</sequence>
<keyword id="KW-0004">4Fe-4S</keyword>
<keyword id="KW-0028">Amino-acid biosynthesis</keyword>
<keyword id="KW-0100">Branched-chain amino acid biosynthesis</keyword>
<keyword id="KW-0408">Iron</keyword>
<keyword id="KW-0411">Iron-sulfur</keyword>
<keyword id="KW-0432">Leucine biosynthesis</keyword>
<keyword id="KW-0456">Lyase</keyword>
<keyword id="KW-0479">Metal-binding</keyword>
<reference key="1">
    <citation type="journal article" date="2008" name="Genome Biol.">
        <title>Encapsulated in silica: genome, proteome and physiology of the thermophilic bacterium Anoxybacillus flavithermus WK1.</title>
        <authorList>
            <person name="Saw J.H."/>
            <person name="Mountain B.W."/>
            <person name="Feng L."/>
            <person name="Omelchenko M.V."/>
            <person name="Hou S."/>
            <person name="Saito J.A."/>
            <person name="Stott M.B."/>
            <person name="Li D."/>
            <person name="Zhao G."/>
            <person name="Wu J."/>
            <person name="Galperin M.Y."/>
            <person name="Koonin E.V."/>
            <person name="Makarova K.S."/>
            <person name="Wolf Y.I."/>
            <person name="Rigden D.J."/>
            <person name="Dunfield P.F."/>
            <person name="Wang L."/>
            <person name="Alam M."/>
        </authorList>
    </citation>
    <scope>NUCLEOTIDE SEQUENCE [LARGE SCALE GENOMIC DNA]</scope>
    <source>
        <strain>DSM 21510 / WK1</strain>
    </source>
</reference>
<name>LEUC_ANOFW</name>
<dbReference type="EC" id="4.2.1.33" evidence="1"/>
<dbReference type="EMBL" id="CP000922">
    <property type="protein sequence ID" value="ACJ32977.1"/>
    <property type="molecule type" value="Genomic_DNA"/>
</dbReference>
<dbReference type="RefSeq" id="WP_012574284.1">
    <property type="nucleotide sequence ID" value="NC_011567.1"/>
</dbReference>
<dbReference type="SMR" id="B7GH21"/>
<dbReference type="STRING" id="491915.Aflv_0596"/>
<dbReference type="GeneID" id="7036853"/>
<dbReference type="KEGG" id="afl:Aflv_0596"/>
<dbReference type="PATRIC" id="fig|491915.6.peg.613"/>
<dbReference type="eggNOG" id="COG0065">
    <property type="taxonomic scope" value="Bacteria"/>
</dbReference>
<dbReference type="HOGENOM" id="CLU_006714_3_4_9"/>
<dbReference type="UniPathway" id="UPA00048">
    <property type="reaction ID" value="UER00071"/>
</dbReference>
<dbReference type="Proteomes" id="UP000000742">
    <property type="component" value="Chromosome"/>
</dbReference>
<dbReference type="GO" id="GO:0003861">
    <property type="term" value="F:3-isopropylmalate dehydratase activity"/>
    <property type="evidence" value="ECO:0007669"/>
    <property type="project" value="UniProtKB-UniRule"/>
</dbReference>
<dbReference type="GO" id="GO:0051539">
    <property type="term" value="F:4 iron, 4 sulfur cluster binding"/>
    <property type="evidence" value="ECO:0007669"/>
    <property type="project" value="UniProtKB-KW"/>
</dbReference>
<dbReference type="GO" id="GO:0046872">
    <property type="term" value="F:metal ion binding"/>
    <property type="evidence" value="ECO:0007669"/>
    <property type="project" value="UniProtKB-KW"/>
</dbReference>
<dbReference type="GO" id="GO:0009098">
    <property type="term" value="P:L-leucine biosynthetic process"/>
    <property type="evidence" value="ECO:0007669"/>
    <property type="project" value="UniProtKB-UniRule"/>
</dbReference>
<dbReference type="CDD" id="cd01583">
    <property type="entry name" value="IPMI"/>
    <property type="match status" value="1"/>
</dbReference>
<dbReference type="FunFam" id="3.30.499.10:FF:000007">
    <property type="entry name" value="3-isopropylmalate dehydratase large subunit"/>
    <property type="match status" value="1"/>
</dbReference>
<dbReference type="Gene3D" id="3.30.499.10">
    <property type="entry name" value="Aconitase, domain 3"/>
    <property type="match status" value="2"/>
</dbReference>
<dbReference type="HAMAP" id="MF_01026">
    <property type="entry name" value="LeuC_type1"/>
    <property type="match status" value="1"/>
</dbReference>
<dbReference type="InterPro" id="IPR004430">
    <property type="entry name" value="3-IsopropMal_deHydase_lsu"/>
</dbReference>
<dbReference type="InterPro" id="IPR015931">
    <property type="entry name" value="Acnase/IPM_dHydase_lsu_aba_1/3"/>
</dbReference>
<dbReference type="InterPro" id="IPR001030">
    <property type="entry name" value="Acoase/IPM_deHydtase_lsu_aba"/>
</dbReference>
<dbReference type="InterPro" id="IPR018136">
    <property type="entry name" value="Aconitase_4Fe-4S_BS"/>
</dbReference>
<dbReference type="InterPro" id="IPR036008">
    <property type="entry name" value="Aconitase_4Fe-4S_dom"/>
</dbReference>
<dbReference type="InterPro" id="IPR050067">
    <property type="entry name" value="IPM_dehydratase_rel_enz"/>
</dbReference>
<dbReference type="InterPro" id="IPR033941">
    <property type="entry name" value="IPMI_cat"/>
</dbReference>
<dbReference type="NCBIfam" id="TIGR00170">
    <property type="entry name" value="leuC"/>
    <property type="match status" value="1"/>
</dbReference>
<dbReference type="NCBIfam" id="NF004016">
    <property type="entry name" value="PRK05478.1"/>
    <property type="match status" value="1"/>
</dbReference>
<dbReference type="NCBIfam" id="NF009116">
    <property type="entry name" value="PRK12466.1"/>
    <property type="match status" value="1"/>
</dbReference>
<dbReference type="PANTHER" id="PTHR43822:SF9">
    <property type="entry name" value="3-ISOPROPYLMALATE DEHYDRATASE"/>
    <property type="match status" value="1"/>
</dbReference>
<dbReference type="PANTHER" id="PTHR43822">
    <property type="entry name" value="HOMOACONITASE, MITOCHONDRIAL-RELATED"/>
    <property type="match status" value="1"/>
</dbReference>
<dbReference type="Pfam" id="PF00330">
    <property type="entry name" value="Aconitase"/>
    <property type="match status" value="1"/>
</dbReference>
<dbReference type="PRINTS" id="PR00415">
    <property type="entry name" value="ACONITASE"/>
</dbReference>
<dbReference type="SUPFAM" id="SSF53732">
    <property type="entry name" value="Aconitase iron-sulfur domain"/>
    <property type="match status" value="1"/>
</dbReference>
<dbReference type="PROSITE" id="PS00450">
    <property type="entry name" value="ACONITASE_1"/>
    <property type="match status" value="1"/>
</dbReference>
<dbReference type="PROSITE" id="PS01244">
    <property type="entry name" value="ACONITASE_2"/>
    <property type="match status" value="1"/>
</dbReference>
<feature type="chain" id="PRO_1000135665" description="3-isopropylmalate dehydratase large subunit">
    <location>
        <begin position="1"/>
        <end position="471"/>
    </location>
</feature>
<feature type="binding site" evidence="1">
    <location>
        <position position="347"/>
    </location>
    <ligand>
        <name>[4Fe-4S] cluster</name>
        <dbReference type="ChEBI" id="CHEBI:49883"/>
    </ligand>
</feature>
<feature type="binding site" evidence="1">
    <location>
        <position position="407"/>
    </location>
    <ligand>
        <name>[4Fe-4S] cluster</name>
        <dbReference type="ChEBI" id="CHEBI:49883"/>
    </ligand>
</feature>
<feature type="binding site" evidence="1">
    <location>
        <position position="410"/>
    </location>
    <ligand>
        <name>[4Fe-4S] cluster</name>
        <dbReference type="ChEBI" id="CHEBI:49883"/>
    </ligand>
</feature>
<evidence type="ECO:0000255" key="1">
    <source>
        <dbReference type="HAMAP-Rule" id="MF_01026"/>
    </source>
</evidence>
<accession>B7GH21</accession>
<comment type="function">
    <text evidence="1">Catalyzes the isomerization between 2-isopropylmalate and 3-isopropylmalate, via the formation of 2-isopropylmaleate.</text>
</comment>
<comment type="catalytic activity">
    <reaction evidence="1">
        <text>(2R,3S)-3-isopropylmalate = (2S)-2-isopropylmalate</text>
        <dbReference type="Rhea" id="RHEA:32287"/>
        <dbReference type="ChEBI" id="CHEBI:1178"/>
        <dbReference type="ChEBI" id="CHEBI:35121"/>
        <dbReference type="EC" id="4.2.1.33"/>
    </reaction>
</comment>
<comment type="cofactor">
    <cofactor evidence="1">
        <name>[4Fe-4S] cluster</name>
        <dbReference type="ChEBI" id="CHEBI:49883"/>
    </cofactor>
    <text evidence="1">Binds 1 [4Fe-4S] cluster per subunit.</text>
</comment>
<comment type="pathway">
    <text evidence="1">Amino-acid biosynthesis; L-leucine biosynthesis; L-leucine from 3-methyl-2-oxobutanoate: step 2/4.</text>
</comment>
<comment type="subunit">
    <text evidence="1">Heterodimer of LeuC and LeuD.</text>
</comment>
<comment type="similarity">
    <text evidence="1">Belongs to the aconitase/IPM isomerase family. LeuC type 1 subfamily.</text>
</comment>
<gene>
    <name evidence="1" type="primary">leuC</name>
    <name type="ordered locus">Aflv_0596</name>
</gene>